<keyword id="KW-1003">Cell membrane</keyword>
<keyword id="KW-0175">Coiled coil</keyword>
<keyword id="KW-0333">Golgi apparatus</keyword>
<keyword id="KW-0472">Membrane</keyword>
<keyword id="KW-0653">Protein transport</keyword>
<keyword id="KW-1185">Reference proteome</keyword>
<keyword id="KW-0813">Transport</keyword>
<accession>Q9SI13</accession>
<protein>
    <recommendedName>
        <fullName>Phosphatidylinositol/phosphatidylcholine transfer protein SFH10</fullName>
    </recommendedName>
    <alternativeName>
        <fullName>Protein SEC FOURTEEN HOMOLOGS 10</fullName>
        <shortName>AtSFH10</shortName>
    </alternativeName>
</protein>
<feature type="chain" id="PRO_0000423470" description="Phosphatidylinositol/phosphatidylcholine transfer protein SFH10">
    <location>
        <begin position="1"/>
        <end position="558"/>
    </location>
</feature>
<feature type="domain" description="CRAL-TRIO" evidence="3">
    <location>
        <begin position="123"/>
        <end position="297"/>
    </location>
</feature>
<feature type="coiled-coil region" evidence="2">
    <location>
        <begin position="464"/>
        <end position="529"/>
    </location>
</feature>
<name>SFH10_ARATH</name>
<dbReference type="EMBL" id="AC007212">
    <property type="protein sequence ID" value="AAD31348.1"/>
    <property type="molecule type" value="Genomic_DNA"/>
</dbReference>
<dbReference type="EMBL" id="CP002685">
    <property type="protein sequence ID" value="AEC06735.1"/>
    <property type="molecule type" value="Genomic_DNA"/>
</dbReference>
<dbReference type="PIR" id="C84561">
    <property type="entry name" value="C84561"/>
</dbReference>
<dbReference type="RefSeq" id="NP_179410.1">
    <property type="nucleotide sequence ID" value="NM_127375.2"/>
</dbReference>
<dbReference type="SMR" id="Q9SI13"/>
<dbReference type="FunCoup" id="Q9SI13">
    <property type="interactions" value="701"/>
</dbReference>
<dbReference type="STRING" id="3702.Q9SI13"/>
<dbReference type="PaxDb" id="3702-AT2G18180.1"/>
<dbReference type="EnsemblPlants" id="AT2G18180.1">
    <property type="protein sequence ID" value="AT2G18180.1"/>
    <property type="gene ID" value="AT2G18180"/>
</dbReference>
<dbReference type="GeneID" id="816331"/>
<dbReference type="Gramene" id="AT2G18180.1">
    <property type="protein sequence ID" value="AT2G18180.1"/>
    <property type="gene ID" value="AT2G18180"/>
</dbReference>
<dbReference type="KEGG" id="ath:AT2G18180"/>
<dbReference type="Araport" id="AT2G18180"/>
<dbReference type="TAIR" id="AT2G18180"/>
<dbReference type="eggNOG" id="KOG1471">
    <property type="taxonomic scope" value="Eukaryota"/>
</dbReference>
<dbReference type="HOGENOM" id="CLU_014001_11_1_1"/>
<dbReference type="InParanoid" id="Q9SI13"/>
<dbReference type="PhylomeDB" id="Q9SI13"/>
<dbReference type="PRO" id="PR:Q9SI13"/>
<dbReference type="Proteomes" id="UP000006548">
    <property type="component" value="Chromosome 2"/>
</dbReference>
<dbReference type="ExpressionAtlas" id="Q9SI13">
    <property type="expression patterns" value="baseline and differential"/>
</dbReference>
<dbReference type="GO" id="GO:0000139">
    <property type="term" value="C:Golgi membrane"/>
    <property type="evidence" value="ECO:0007669"/>
    <property type="project" value="UniProtKB-SubCell"/>
</dbReference>
<dbReference type="GO" id="GO:0005886">
    <property type="term" value="C:plasma membrane"/>
    <property type="evidence" value="ECO:0007669"/>
    <property type="project" value="UniProtKB-SubCell"/>
</dbReference>
<dbReference type="GO" id="GO:0015031">
    <property type="term" value="P:protein transport"/>
    <property type="evidence" value="ECO:0007669"/>
    <property type="project" value="UniProtKB-KW"/>
</dbReference>
<dbReference type="CDD" id="cd00170">
    <property type="entry name" value="SEC14"/>
    <property type="match status" value="1"/>
</dbReference>
<dbReference type="FunFam" id="3.40.525.10:FF:000011">
    <property type="entry name" value="SEC14 cytosolic factor"/>
    <property type="match status" value="1"/>
</dbReference>
<dbReference type="Gene3D" id="3.40.525.10">
    <property type="entry name" value="CRAL-TRIO lipid binding domain"/>
    <property type="match status" value="1"/>
</dbReference>
<dbReference type="Gene3D" id="1.10.8.20">
    <property type="entry name" value="N-terminal domain of phosphatidylinositol transfer protein sec14p"/>
    <property type="match status" value="1"/>
</dbReference>
<dbReference type="InterPro" id="IPR001251">
    <property type="entry name" value="CRAL-TRIO_dom"/>
</dbReference>
<dbReference type="InterPro" id="IPR036865">
    <property type="entry name" value="CRAL-TRIO_dom_sf"/>
</dbReference>
<dbReference type="InterPro" id="IPR011074">
    <property type="entry name" value="CRAL/TRIO_N_dom"/>
</dbReference>
<dbReference type="InterPro" id="IPR036273">
    <property type="entry name" value="CRAL/TRIO_N_dom_sf"/>
</dbReference>
<dbReference type="InterPro" id="IPR051026">
    <property type="entry name" value="PI/PC_transfer"/>
</dbReference>
<dbReference type="PANTHER" id="PTHR45657">
    <property type="entry name" value="CRAL-TRIO DOMAIN-CONTAINING PROTEIN YKL091C-RELATED"/>
    <property type="match status" value="1"/>
</dbReference>
<dbReference type="PANTHER" id="PTHR45657:SF68">
    <property type="entry name" value="PHOSPHATIDYLINOSITOL_PHOSPHATIDYLCHOLINE TRANSFER PROTEIN SFH10"/>
    <property type="match status" value="1"/>
</dbReference>
<dbReference type="Pfam" id="PF00650">
    <property type="entry name" value="CRAL_TRIO"/>
    <property type="match status" value="1"/>
</dbReference>
<dbReference type="Pfam" id="PF03765">
    <property type="entry name" value="CRAL_TRIO_N"/>
    <property type="match status" value="1"/>
</dbReference>
<dbReference type="SMART" id="SM01100">
    <property type="entry name" value="CRAL_TRIO_N"/>
    <property type="match status" value="1"/>
</dbReference>
<dbReference type="SMART" id="SM00516">
    <property type="entry name" value="SEC14"/>
    <property type="match status" value="1"/>
</dbReference>
<dbReference type="SUPFAM" id="SSF52087">
    <property type="entry name" value="CRAL/TRIO domain"/>
    <property type="match status" value="1"/>
</dbReference>
<dbReference type="SUPFAM" id="SSF46938">
    <property type="entry name" value="CRAL/TRIO N-terminal domain"/>
    <property type="match status" value="1"/>
</dbReference>
<dbReference type="PROSITE" id="PS50191">
    <property type="entry name" value="CRAL_TRIO"/>
    <property type="match status" value="1"/>
</dbReference>
<gene>
    <name type="primary">SFH10</name>
    <name type="ordered locus">At2g18180</name>
    <name type="ORF">F8D23.4</name>
</gene>
<comment type="function">
    <text evidence="1">Required for transport of secretory proteins from the Golgi complex. Catalyzes the transfer of phosphatidylinositol and phosphatidylcholine between membranes in vitro (By similarity).</text>
</comment>
<comment type="subcellular location">
    <subcellularLocation>
        <location evidence="1">Golgi apparatus membrane</location>
        <topology evidence="1">Peripheral membrane protein</topology>
    </subcellularLocation>
    <subcellularLocation>
        <location evidence="1">Cell membrane</location>
        <topology evidence="1">Peripheral membrane protein</topology>
    </subcellularLocation>
</comment>
<comment type="similarity">
    <text evidence="4">Belongs to the SFH family.</text>
</comment>
<evidence type="ECO:0000250" key="1"/>
<evidence type="ECO:0000255" key="2"/>
<evidence type="ECO:0000255" key="3">
    <source>
        <dbReference type="PROSITE-ProRule" id="PRU00056"/>
    </source>
</evidence>
<evidence type="ECO:0000305" key="4"/>
<organism>
    <name type="scientific">Arabidopsis thaliana</name>
    <name type="common">Mouse-ear cress</name>
    <dbReference type="NCBI Taxonomy" id="3702"/>
    <lineage>
        <taxon>Eukaryota</taxon>
        <taxon>Viridiplantae</taxon>
        <taxon>Streptophyta</taxon>
        <taxon>Embryophyta</taxon>
        <taxon>Tracheophyta</taxon>
        <taxon>Spermatophyta</taxon>
        <taxon>Magnoliopsida</taxon>
        <taxon>eudicotyledons</taxon>
        <taxon>Gunneridae</taxon>
        <taxon>Pentapetalae</taxon>
        <taxon>rosids</taxon>
        <taxon>malvids</taxon>
        <taxon>Brassicales</taxon>
        <taxon>Brassicaceae</taxon>
        <taxon>Camelineae</taxon>
        <taxon>Arabidopsis</taxon>
    </lineage>
</organism>
<reference key="1">
    <citation type="journal article" date="1999" name="Nature">
        <title>Sequence and analysis of chromosome 2 of the plant Arabidopsis thaliana.</title>
        <authorList>
            <person name="Lin X."/>
            <person name="Kaul S."/>
            <person name="Rounsley S.D."/>
            <person name="Shea T.P."/>
            <person name="Benito M.-I."/>
            <person name="Town C.D."/>
            <person name="Fujii C.Y."/>
            <person name="Mason T.M."/>
            <person name="Bowman C.L."/>
            <person name="Barnstead M.E."/>
            <person name="Feldblyum T.V."/>
            <person name="Buell C.R."/>
            <person name="Ketchum K.A."/>
            <person name="Lee J.J."/>
            <person name="Ronning C.M."/>
            <person name="Koo H.L."/>
            <person name="Moffat K.S."/>
            <person name="Cronin L.A."/>
            <person name="Shen M."/>
            <person name="Pai G."/>
            <person name="Van Aken S."/>
            <person name="Umayam L."/>
            <person name="Tallon L.J."/>
            <person name="Gill J.E."/>
            <person name="Adams M.D."/>
            <person name="Carrera A.J."/>
            <person name="Creasy T.H."/>
            <person name="Goodman H.M."/>
            <person name="Somerville C.R."/>
            <person name="Copenhaver G.P."/>
            <person name="Preuss D."/>
            <person name="Nierman W.C."/>
            <person name="White O."/>
            <person name="Eisen J.A."/>
            <person name="Salzberg S.L."/>
            <person name="Fraser C.M."/>
            <person name="Venter J.C."/>
        </authorList>
    </citation>
    <scope>NUCLEOTIDE SEQUENCE [LARGE SCALE GENOMIC DNA]</scope>
    <source>
        <strain>cv. Columbia</strain>
    </source>
</reference>
<reference key="2">
    <citation type="journal article" date="2017" name="Plant J.">
        <title>Araport11: a complete reannotation of the Arabidopsis thaliana reference genome.</title>
        <authorList>
            <person name="Cheng C.Y."/>
            <person name="Krishnakumar V."/>
            <person name="Chan A.P."/>
            <person name="Thibaud-Nissen F."/>
            <person name="Schobel S."/>
            <person name="Town C.D."/>
        </authorList>
    </citation>
    <scope>GENOME REANNOTATION</scope>
    <source>
        <strain>cv. Columbia</strain>
    </source>
</reference>
<reference key="3">
    <citation type="journal article" date="2005" name="J. Cell Biol.">
        <title>A Sec14p-nodulin domain phosphatidylinositol transfer protein polarizes membrane growth of Arabidopsis thaliana root hairs.</title>
        <authorList>
            <person name="Vincent P."/>
            <person name="Chua M."/>
            <person name="Nogue F."/>
            <person name="Fairbrother A."/>
            <person name="Mekeel H."/>
            <person name="Xu Y."/>
            <person name="Allen N."/>
            <person name="Bibikova T.N."/>
            <person name="Gilroy S."/>
            <person name="Bankaitis V.A."/>
        </authorList>
    </citation>
    <scope>GENE FAMILY</scope>
</reference>
<reference key="4">
    <citation type="journal article" date="2006" name="Nat. Chem. Biol.">
        <title>Phosphatidylinositol transfer proteins and cellular nanoreactors for lipid signaling.</title>
        <authorList>
            <person name="Ile K.E."/>
            <person name="Schaaf G."/>
            <person name="Bankaitis V.A."/>
        </authorList>
    </citation>
    <scope>REVIEW</scope>
</reference>
<sequence length="558" mass="63359">MSLNVDLDVCVLERPNVCSFKKRSCSKLSCSLTKKRRSSKVMSVEIFEDEHDAEELKVVDAFRQVLILDELLPDKHDDYHMMLRFLKARKFDLEKTNQMWSDMLRWRKEFGADTVMEDFEFKEIDEVLKYYPQGHHGVDKEGRPVYIERLGQVDSTKLMQVTTMDRYVNYHVMEFERTFNVKFPACSIAAKKHIDQSTTILDVQGVGLKNFNKAARDLITRLQKVDGDNYPETLNRMFIINAGSGFRMLWNTVKSFLDPKTTAKIHVLGNKYQSKLLEIIDASELPEFLGGSCTCADNGGCMRSDKGPWNNPDIMKRVNNGDHICSKRSQADNAGENIISQGNNSAVEEAPETDQSQPSPCQNVVVAHPAWNIPEAHKFSLSKRDVYAIQEACKATNESGRSPIFTGVMAFVMGVVTMIRVTKNVPRKLTESTIYSSPVYCDENSMNKSSMHGKKMATTTISGEDFMAVMKRMAELEQKVTNLSAQPATMPPEKEEMLNAAISRADFLEQELAATKKALDDSLTRQEDLVAYVERKKKKKKLVRFQINAYLTNFCFGV</sequence>
<proteinExistence type="inferred from homology"/>